<organism>
    <name type="scientific">Breda virus 1</name>
    <name type="common">BRV-1</name>
    <dbReference type="NCBI Taxonomy" id="360393"/>
    <lineage>
        <taxon>Viruses</taxon>
        <taxon>Riboviria</taxon>
        <taxon>Orthornavirae</taxon>
        <taxon>Pisuviricota</taxon>
        <taxon>Pisoniviricetes</taxon>
        <taxon>Nidovirales</taxon>
        <taxon>Tornidovirineae</taxon>
        <taxon>Tobaniviridae</taxon>
        <taxon>Torovirinae</taxon>
        <taxon>Torovirus</taxon>
        <taxon>Renitovirus</taxon>
        <taxon>Bovine torovirus</taxon>
    </lineage>
</organism>
<name>NCAP_BRV1</name>
<accession>O90306</accession>
<accession>Q3T8I7</accession>
<feature type="chain" id="PRO_0000283984" description="Nucleoprotein">
    <location>
        <begin position="1"/>
        <end position="167"/>
    </location>
</feature>
<feature type="region of interest" description="Disordered" evidence="2">
    <location>
        <begin position="28"/>
        <end position="94"/>
    </location>
</feature>
<feature type="region of interest" description="involved in nuclear and nucleolar localization" evidence="3">
    <location>
        <begin position="31"/>
        <end position="62"/>
    </location>
</feature>
<feature type="short sequence motif" description="Nuclear export signal" evidence="3">
    <location>
        <begin position="153"/>
        <end position="162"/>
    </location>
</feature>
<feature type="compositionally biased region" description="Low complexity" evidence="2">
    <location>
        <begin position="51"/>
        <end position="90"/>
    </location>
</feature>
<feature type="sequence variant">
    <original>C</original>
    <variation>F</variation>
    <location>
        <position position="12"/>
    </location>
</feature>
<feature type="sequence variant">
    <original>S</original>
    <variation>P</variation>
    <location>
        <position position="30"/>
    </location>
</feature>
<feature type="sequence variant">
    <original>R</original>
    <variation>G</variation>
    <location>
        <position position="74"/>
    </location>
</feature>
<feature type="sequence variant">
    <original>N</original>
    <variation>S</variation>
    <location>
        <position position="84"/>
    </location>
</feature>
<feature type="sequence variant">
    <original>P</original>
    <variation>A</variation>
    <location>
        <position position="91"/>
    </location>
</feature>
<keyword id="KW-1048">Host nucleus</keyword>
<keyword id="KW-1185">Reference proteome</keyword>
<keyword id="KW-0687">Ribonucleoprotein</keyword>
<keyword id="KW-0694">RNA-binding</keyword>
<keyword id="KW-0543">Viral nucleoprotein</keyword>
<keyword id="KW-0946">Virion</keyword>
<sequence>MNSMLNPNAVPCQPSPQVVAIPMQYPSGFSPGFRRQRNPGFRPMFNRRRNNNGNQNRGRQNRQRVQNNNRGNIRNRQNNGQRGNRRQYNQPSPNVPFEQQLLMMANETAYAATYPPEMQNVAPTKLVKIAKRAAMQIVSGHATVEISNGTEDSNKRVATFTIKVVMN</sequence>
<reference key="1">
    <citation type="journal article" date="1998" name="Virus Res.">
        <title>Bovine torovirus: sequencing of the structural genes and expression of the nucleocapsid protein of Breda virus.</title>
        <authorList>
            <person name="Duckmanton L.M."/>
            <person name="Tellier R."/>
            <person name="Liu P."/>
            <person name="Petric M."/>
        </authorList>
    </citation>
    <scope>NUCLEOTIDE SEQUENCE [GENOMIC RNA]</scope>
</reference>
<reference key="2">
    <citation type="journal article" date="2006" name="Virus Res.">
        <title>The complete sequence of the bovine torovirus genome.</title>
        <authorList>
            <person name="Draker R."/>
            <person name="Roper R.L."/>
            <person name="Petric M."/>
            <person name="Tellier R."/>
        </authorList>
    </citation>
    <scope>NUCLEOTIDE SEQUENCE [GENOMIC RNA]</scope>
</reference>
<reference key="3">
    <citation type="journal article" date="2021" name="J. Virol.">
        <title>Characterization of Localization and Export Signals of Bovine Torovirus Nucleocapsid Protein Responsible for Extensive Nuclear and Nucleolar Accumulation and Their Importance for Virus Growth.</title>
        <authorList>
            <person name="Ujike M."/>
            <person name="Kawachi Y."/>
            <person name="Matsunaga Y."/>
            <person name="Etho Y."/>
            <person name="Asanuma H."/>
            <person name="Kamitani W."/>
            <person name="Taguchi F."/>
        </authorList>
    </citation>
    <scope>SUBCELLULAR LOCATION</scope>
    <source>
        <strain>Aichi</strain>
    </source>
</reference>
<proteinExistence type="inferred from homology"/>
<evidence type="ECO:0000250" key="1"/>
<evidence type="ECO:0000256" key="2">
    <source>
        <dbReference type="SAM" id="MobiDB-lite"/>
    </source>
</evidence>
<evidence type="ECO:0000269" key="3">
    <source>
    </source>
</evidence>
<evidence type="ECO:0000305" key="4"/>
<gene>
    <name type="primary">N</name>
</gene>
<dbReference type="EMBL" id="AF076621">
    <property type="protein sequence ID" value="AAD03843.1"/>
    <property type="molecule type" value="Genomic_RNA"/>
</dbReference>
<dbReference type="EMBL" id="AY427798">
    <property type="protein sequence ID" value="AAS17962.1"/>
    <property type="molecule type" value="Genomic_RNA"/>
</dbReference>
<dbReference type="RefSeq" id="YP_337910.1">
    <property type="nucleotide sequence ID" value="NC_007447.1"/>
</dbReference>
<dbReference type="GeneID" id="3707768"/>
<dbReference type="KEGG" id="vg:3707768"/>
<dbReference type="Proteomes" id="UP000000355">
    <property type="component" value="Segment"/>
</dbReference>
<dbReference type="GO" id="GO:0044196">
    <property type="term" value="C:host cell nucleolus"/>
    <property type="evidence" value="ECO:0007669"/>
    <property type="project" value="UniProtKB-SubCell"/>
</dbReference>
<dbReference type="GO" id="GO:0044095">
    <property type="term" value="C:host cell nucleoplasm"/>
    <property type="evidence" value="ECO:0007669"/>
    <property type="project" value="UniProtKB-SubCell"/>
</dbReference>
<dbReference type="GO" id="GO:1990904">
    <property type="term" value="C:ribonucleoprotein complex"/>
    <property type="evidence" value="ECO:0007669"/>
    <property type="project" value="UniProtKB-KW"/>
</dbReference>
<dbReference type="GO" id="GO:0019013">
    <property type="term" value="C:viral nucleocapsid"/>
    <property type="evidence" value="ECO:0007669"/>
    <property type="project" value="UniProtKB-KW"/>
</dbReference>
<dbReference type="GO" id="GO:0003723">
    <property type="term" value="F:RNA binding"/>
    <property type="evidence" value="ECO:0007669"/>
    <property type="project" value="UniProtKB-KW"/>
</dbReference>
<dbReference type="InterPro" id="IPR020253">
    <property type="entry name" value="Torovirus_nucleocapsid"/>
</dbReference>
<dbReference type="Pfam" id="PF11030">
    <property type="entry name" value="Nucleocapsid-N"/>
    <property type="match status" value="1"/>
</dbReference>
<comment type="function">
    <text evidence="1">Major structural component of virions that associates with genomic RNA.</text>
</comment>
<comment type="subcellular location">
    <subcellularLocation>
        <location>Virion</location>
    </subcellularLocation>
    <subcellularLocation>
        <location evidence="3">Host nucleus</location>
        <location evidence="3">Host nucleoplasm</location>
    </subcellularLocation>
    <subcellularLocation>
        <location evidence="3">Host nucleus</location>
        <location evidence="3">Host nucleolus</location>
    </subcellularLocation>
    <text evidence="1 3">Located inside the virion, complexed with the viral RNA. Localized in the nucleolus during early infection, but is excluded from the nucleolus during later infection and accumulates then nonuniformly in the nucleoplasm (PubMed:33177195).</text>
</comment>
<comment type="similarity">
    <text evidence="4">Belongs to the torovirinae nucleoprotein family.</text>
</comment>
<protein>
    <recommendedName>
        <fullName>Nucleoprotein</fullName>
    </recommendedName>
    <alternativeName>
        <fullName>Nucleocapsid protein</fullName>
        <shortName>NC</shortName>
        <shortName>Protein N</shortName>
    </alternativeName>
</protein>
<organismHost>
    <name type="scientific">Bos taurus</name>
    <name type="common">Bovine</name>
    <dbReference type="NCBI Taxonomy" id="9913"/>
</organismHost>